<dbReference type="EC" id="3.1.11.6" evidence="1"/>
<dbReference type="EMBL" id="CP000350">
    <property type="protein sequence ID" value="ABJ75858.1"/>
    <property type="molecule type" value="Genomic_DNA"/>
</dbReference>
<dbReference type="RefSeq" id="WP_002728555.1">
    <property type="nucleotide sequence ID" value="NC_008510.1"/>
</dbReference>
<dbReference type="SMR" id="Q04TB2"/>
<dbReference type="KEGG" id="lbj:LBJ_1273"/>
<dbReference type="HOGENOM" id="CLU_145918_3_1_12"/>
<dbReference type="Proteomes" id="UP000000656">
    <property type="component" value="Chromosome 1"/>
</dbReference>
<dbReference type="GO" id="GO:0005829">
    <property type="term" value="C:cytosol"/>
    <property type="evidence" value="ECO:0007669"/>
    <property type="project" value="TreeGrafter"/>
</dbReference>
<dbReference type="GO" id="GO:0009318">
    <property type="term" value="C:exodeoxyribonuclease VII complex"/>
    <property type="evidence" value="ECO:0007669"/>
    <property type="project" value="InterPro"/>
</dbReference>
<dbReference type="GO" id="GO:0008855">
    <property type="term" value="F:exodeoxyribonuclease VII activity"/>
    <property type="evidence" value="ECO:0007669"/>
    <property type="project" value="UniProtKB-UniRule"/>
</dbReference>
<dbReference type="GO" id="GO:0006308">
    <property type="term" value="P:DNA catabolic process"/>
    <property type="evidence" value="ECO:0007669"/>
    <property type="project" value="UniProtKB-UniRule"/>
</dbReference>
<dbReference type="Gene3D" id="1.10.287.1040">
    <property type="entry name" value="Exonuclease VII, small subunit"/>
    <property type="match status" value="1"/>
</dbReference>
<dbReference type="HAMAP" id="MF_00337">
    <property type="entry name" value="Exonuc_7_S"/>
    <property type="match status" value="1"/>
</dbReference>
<dbReference type="InterPro" id="IPR003761">
    <property type="entry name" value="Exonuc_VII_S"/>
</dbReference>
<dbReference type="InterPro" id="IPR037004">
    <property type="entry name" value="Exonuc_VII_ssu_sf"/>
</dbReference>
<dbReference type="NCBIfam" id="NF002140">
    <property type="entry name" value="PRK00977.1-4"/>
    <property type="match status" value="1"/>
</dbReference>
<dbReference type="NCBIfam" id="NF010672">
    <property type="entry name" value="PRK14069.1"/>
    <property type="match status" value="1"/>
</dbReference>
<dbReference type="NCBIfam" id="TIGR01280">
    <property type="entry name" value="xseB"/>
    <property type="match status" value="1"/>
</dbReference>
<dbReference type="PANTHER" id="PTHR34137">
    <property type="entry name" value="EXODEOXYRIBONUCLEASE 7 SMALL SUBUNIT"/>
    <property type="match status" value="1"/>
</dbReference>
<dbReference type="PANTHER" id="PTHR34137:SF1">
    <property type="entry name" value="EXODEOXYRIBONUCLEASE 7 SMALL SUBUNIT"/>
    <property type="match status" value="1"/>
</dbReference>
<dbReference type="Pfam" id="PF02609">
    <property type="entry name" value="Exonuc_VII_S"/>
    <property type="match status" value="1"/>
</dbReference>
<dbReference type="SUPFAM" id="SSF116842">
    <property type="entry name" value="XseB-like"/>
    <property type="match status" value="1"/>
</dbReference>
<comment type="function">
    <text evidence="1">Bidirectionally degrades single-stranded DNA into large acid-insoluble oligonucleotides, which are then degraded further into small acid-soluble oligonucleotides.</text>
</comment>
<comment type="catalytic activity">
    <reaction evidence="1">
        <text>Exonucleolytic cleavage in either 5'- to 3'- or 3'- to 5'-direction to yield nucleoside 5'-phosphates.</text>
        <dbReference type="EC" id="3.1.11.6"/>
    </reaction>
</comment>
<comment type="subunit">
    <text evidence="1">Heterooligomer composed of large and small subunits.</text>
</comment>
<comment type="subcellular location">
    <subcellularLocation>
        <location evidence="1">Cytoplasm</location>
    </subcellularLocation>
</comment>
<comment type="similarity">
    <text evidence="1">Belongs to the XseB family.</text>
</comment>
<name>EX7S_LEPBJ</name>
<keyword id="KW-0963">Cytoplasm</keyword>
<keyword id="KW-0269">Exonuclease</keyword>
<keyword id="KW-0378">Hydrolase</keyword>
<keyword id="KW-0540">Nuclease</keyword>
<accession>Q04TB2</accession>
<evidence type="ECO:0000255" key="1">
    <source>
        <dbReference type="HAMAP-Rule" id="MF_00337"/>
    </source>
</evidence>
<evidence type="ECO:0000256" key="2">
    <source>
        <dbReference type="SAM" id="MobiDB-lite"/>
    </source>
</evidence>
<protein>
    <recommendedName>
        <fullName evidence="1">Exodeoxyribonuclease 7 small subunit</fullName>
        <ecNumber evidence="1">3.1.11.6</ecNumber>
    </recommendedName>
    <alternativeName>
        <fullName evidence="1">Exodeoxyribonuclease VII small subunit</fullName>
        <shortName evidence="1">Exonuclease VII small subunit</shortName>
    </alternativeName>
</protein>
<proteinExistence type="inferred from homology"/>
<reference key="1">
    <citation type="journal article" date="2006" name="Proc. Natl. Acad. Sci. U.S.A.">
        <title>Genome reduction in Leptospira borgpetersenii reflects limited transmission potential.</title>
        <authorList>
            <person name="Bulach D.M."/>
            <person name="Zuerner R.L."/>
            <person name="Wilson P."/>
            <person name="Seemann T."/>
            <person name="McGrath A."/>
            <person name="Cullen P.A."/>
            <person name="Davis J."/>
            <person name="Johnson M."/>
            <person name="Kuczek E."/>
            <person name="Alt D.P."/>
            <person name="Peterson-Burch B."/>
            <person name="Coppel R.L."/>
            <person name="Rood J.I."/>
            <person name="Davies J.K."/>
            <person name="Adler B."/>
        </authorList>
    </citation>
    <scope>NUCLEOTIDE SEQUENCE [LARGE SCALE GENOMIC DNA]</scope>
    <source>
        <strain>JB197</strain>
    </source>
</reference>
<gene>
    <name evidence="1" type="primary">xseB</name>
    <name type="ordered locus">LBJ_1273</name>
</gene>
<organism>
    <name type="scientific">Leptospira borgpetersenii serovar Hardjo-bovis (strain JB197)</name>
    <dbReference type="NCBI Taxonomy" id="355277"/>
    <lineage>
        <taxon>Bacteria</taxon>
        <taxon>Pseudomonadati</taxon>
        <taxon>Spirochaetota</taxon>
        <taxon>Spirochaetia</taxon>
        <taxon>Leptospirales</taxon>
        <taxon>Leptospiraceae</taxon>
        <taxon>Leptospira</taxon>
    </lineage>
</organism>
<sequence>MAEARSKISFEDALVELEQIAEKLERQDFSLEESLKAYERGMELKKICRGILDSAEGKIEALTKDESQKTNKTGFRTESKSTSQTSSDSVLEEDLF</sequence>
<feature type="chain" id="PRO_0000303720" description="Exodeoxyribonuclease 7 small subunit">
    <location>
        <begin position="1"/>
        <end position="96"/>
    </location>
</feature>
<feature type="region of interest" description="Disordered" evidence="2">
    <location>
        <begin position="61"/>
        <end position="96"/>
    </location>
</feature>
<feature type="compositionally biased region" description="Basic and acidic residues" evidence="2">
    <location>
        <begin position="61"/>
        <end position="79"/>
    </location>
</feature>
<feature type="compositionally biased region" description="Low complexity" evidence="2">
    <location>
        <begin position="80"/>
        <end position="89"/>
    </location>
</feature>